<organism>
    <name type="scientific">Rhizobium rhizogenes (strain K84 / ATCC BAA-868)</name>
    <name type="common">Agrobacterium radiobacter</name>
    <dbReference type="NCBI Taxonomy" id="311403"/>
    <lineage>
        <taxon>Bacteria</taxon>
        <taxon>Pseudomonadati</taxon>
        <taxon>Pseudomonadota</taxon>
        <taxon>Alphaproteobacteria</taxon>
        <taxon>Hyphomicrobiales</taxon>
        <taxon>Rhizobiaceae</taxon>
        <taxon>Rhizobium/Agrobacterium group</taxon>
        <taxon>Rhizobium</taxon>
    </lineage>
</organism>
<gene>
    <name evidence="1" type="primary">mobA</name>
    <name type="ordered locus">Arad_2706</name>
</gene>
<proteinExistence type="inferred from homology"/>
<comment type="function">
    <text evidence="1">Transfers a GMP moiety from GTP to Mo-molybdopterin (Mo-MPT) cofactor (Moco or molybdenum cofactor) to form Mo-molybdopterin guanine dinucleotide (Mo-MGD) cofactor.</text>
</comment>
<comment type="catalytic activity">
    <reaction evidence="1">
        <text>Mo-molybdopterin + GTP + H(+) = Mo-molybdopterin guanine dinucleotide + diphosphate</text>
        <dbReference type="Rhea" id="RHEA:34243"/>
        <dbReference type="ChEBI" id="CHEBI:15378"/>
        <dbReference type="ChEBI" id="CHEBI:33019"/>
        <dbReference type="ChEBI" id="CHEBI:37565"/>
        <dbReference type="ChEBI" id="CHEBI:71302"/>
        <dbReference type="ChEBI" id="CHEBI:71310"/>
        <dbReference type="EC" id="2.7.7.77"/>
    </reaction>
</comment>
<comment type="cofactor">
    <cofactor evidence="1">
        <name>Mg(2+)</name>
        <dbReference type="ChEBI" id="CHEBI:18420"/>
    </cofactor>
</comment>
<comment type="subunit">
    <text evidence="1">Monomer.</text>
</comment>
<comment type="subcellular location">
    <subcellularLocation>
        <location evidence="1">Cytoplasm</location>
    </subcellularLocation>
</comment>
<comment type="domain">
    <text evidence="1">The N-terminal domain determines nucleotide recognition and specific binding, while the C-terminal domain determines the specific binding to the target protein.</text>
</comment>
<comment type="similarity">
    <text evidence="1">Belongs to the MobA family.</text>
</comment>
<protein>
    <recommendedName>
        <fullName evidence="1">Molybdenum cofactor guanylyltransferase</fullName>
        <shortName evidence="1">MoCo guanylyltransferase</shortName>
        <ecNumber evidence="1">2.7.7.77</ecNumber>
    </recommendedName>
    <alternativeName>
        <fullName evidence="1">GTP:molybdopterin guanylyltransferase</fullName>
    </alternativeName>
    <alternativeName>
        <fullName evidence="1">Mo-MPT guanylyltransferase</fullName>
    </alternativeName>
    <alternativeName>
        <fullName evidence="1">Molybdopterin guanylyltransferase</fullName>
    </alternativeName>
    <alternativeName>
        <fullName evidence="1">Molybdopterin-guanine dinucleotide synthase</fullName>
        <shortName evidence="1">MGD synthase</shortName>
    </alternativeName>
</protein>
<reference key="1">
    <citation type="journal article" date="2009" name="J. Bacteriol.">
        <title>Genome sequences of three Agrobacterium biovars help elucidate the evolution of multichromosome genomes in bacteria.</title>
        <authorList>
            <person name="Slater S.C."/>
            <person name="Goldman B.S."/>
            <person name="Goodner B."/>
            <person name="Setubal J.C."/>
            <person name="Farrand S.K."/>
            <person name="Nester E.W."/>
            <person name="Burr T.J."/>
            <person name="Banta L."/>
            <person name="Dickerman A.W."/>
            <person name="Paulsen I."/>
            <person name="Otten L."/>
            <person name="Suen G."/>
            <person name="Welch R."/>
            <person name="Almeida N.F."/>
            <person name="Arnold F."/>
            <person name="Burton O.T."/>
            <person name="Du Z."/>
            <person name="Ewing A."/>
            <person name="Godsy E."/>
            <person name="Heisel S."/>
            <person name="Houmiel K.L."/>
            <person name="Jhaveri J."/>
            <person name="Lu J."/>
            <person name="Miller N.M."/>
            <person name="Norton S."/>
            <person name="Chen Q."/>
            <person name="Phoolcharoen W."/>
            <person name="Ohlin V."/>
            <person name="Ondrusek D."/>
            <person name="Pride N."/>
            <person name="Stricklin S.L."/>
            <person name="Sun J."/>
            <person name="Wheeler C."/>
            <person name="Wilson L."/>
            <person name="Zhu H."/>
            <person name="Wood D.W."/>
        </authorList>
    </citation>
    <scope>NUCLEOTIDE SEQUENCE [LARGE SCALE GENOMIC DNA]</scope>
    <source>
        <strain>K84 / ATCC BAA-868</strain>
    </source>
</reference>
<evidence type="ECO:0000255" key="1">
    <source>
        <dbReference type="HAMAP-Rule" id="MF_00316"/>
    </source>
</evidence>
<sequence length="216" mass="23569">MPGFIADPAEVPPFLLAGGRSSRMGVNKAFVSLGGEKLLTRIATRIGQRQTIPVALNADADWPDTEGLPLVPDTIPGKLGPLAGVLTAMRYTATHHPHASHLVTVPIDSPFFPIDLVAQLAEPIEGRNDIAIATSLGRDHPVFGLWPVSIADDLESWLLADEKRRVRDFLARHLVRTVDFPTIETAIGPLDPFFNINRPDDLIDAEKWLAALERTP</sequence>
<feature type="chain" id="PRO_1000132951" description="Molybdenum cofactor guanylyltransferase">
    <location>
        <begin position="1"/>
        <end position="216"/>
    </location>
</feature>
<feature type="binding site" evidence="1">
    <location>
        <begin position="16"/>
        <end position="18"/>
    </location>
    <ligand>
        <name>GTP</name>
        <dbReference type="ChEBI" id="CHEBI:37565"/>
    </ligand>
</feature>
<feature type="binding site" evidence="1">
    <location>
        <position position="28"/>
    </location>
    <ligand>
        <name>GTP</name>
        <dbReference type="ChEBI" id="CHEBI:37565"/>
    </ligand>
</feature>
<feature type="binding site" evidence="1">
    <location>
        <position position="57"/>
    </location>
    <ligand>
        <name>GTP</name>
        <dbReference type="ChEBI" id="CHEBI:37565"/>
    </ligand>
</feature>
<feature type="binding site" evidence="1">
    <location>
        <position position="73"/>
    </location>
    <ligand>
        <name>GTP</name>
        <dbReference type="ChEBI" id="CHEBI:37565"/>
    </ligand>
</feature>
<feature type="binding site" evidence="1">
    <location>
        <position position="108"/>
    </location>
    <ligand>
        <name>GTP</name>
        <dbReference type="ChEBI" id="CHEBI:37565"/>
    </ligand>
</feature>
<feature type="binding site" evidence="1">
    <location>
        <position position="108"/>
    </location>
    <ligand>
        <name>Mg(2+)</name>
        <dbReference type="ChEBI" id="CHEBI:18420"/>
    </ligand>
</feature>
<keyword id="KW-0963">Cytoplasm</keyword>
<keyword id="KW-0342">GTP-binding</keyword>
<keyword id="KW-0460">Magnesium</keyword>
<keyword id="KW-0479">Metal-binding</keyword>
<keyword id="KW-0501">Molybdenum cofactor biosynthesis</keyword>
<keyword id="KW-0547">Nucleotide-binding</keyword>
<keyword id="KW-0808">Transferase</keyword>
<accession>B9JFZ4</accession>
<dbReference type="EC" id="2.7.7.77" evidence="1"/>
<dbReference type="EMBL" id="CP000628">
    <property type="protein sequence ID" value="ACM26834.1"/>
    <property type="molecule type" value="Genomic_DNA"/>
</dbReference>
<dbReference type="RefSeq" id="WP_012651649.1">
    <property type="nucleotide sequence ID" value="NC_011985.1"/>
</dbReference>
<dbReference type="SMR" id="B9JFZ4"/>
<dbReference type="STRING" id="311403.Arad_2706"/>
<dbReference type="GeneID" id="86848696"/>
<dbReference type="KEGG" id="ara:Arad_2706"/>
<dbReference type="eggNOG" id="COG0746">
    <property type="taxonomic scope" value="Bacteria"/>
</dbReference>
<dbReference type="HOGENOM" id="CLU_055597_5_0_5"/>
<dbReference type="Proteomes" id="UP000001600">
    <property type="component" value="Chromosome 1"/>
</dbReference>
<dbReference type="GO" id="GO:0005737">
    <property type="term" value="C:cytoplasm"/>
    <property type="evidence" value="ECO:0007669"/>
    <property type="project" value="UniProtKB-SubCell"/>
</dbReference>
<dbReference type="GO" id="GO:0005525">
    <property type="term" value="F:GTP binding"/>
    <property type="evidence" value="ECO:0007669"/>
    <property type="project" value="UniProtKB-UniRule"/>
</dbReference>
<dbReference type="GO" id="GO:0046872">
    <property type="term" value="F:metal ion binding"/>
    <property type="evidence" value="ECO:0007669"/>
    <property type="project" value="UniProtKB-KW"/>
</dbReference>
<dbReference type="GO" id="GO:0061603">
    <property type="term" value="F:molybdenum cofactor guanylyltransferase activity"/>
    <property type="evidence" value="ECO:0007669"/>
    <property type="project" value="UniProtKB-EC"/>
</dbReference>
<dbReference type="GO" id="GO:1902758">
    <property type="term" value="P:bis(molybdopterin guanine dinucleotide)molybdenum biosynthetic process"/>
    <property type="evidence" value="ECO:0007669"/>
    <property type="project" value="TreeGrafter"/>
</dbReference>
<dbReference type="CDD" id="cd02503">
    <property type="entry name" value="MobA"/>
    <property type="match status" value="1"/>
</dbReference>
<dbReference type="Gene3D" id="3.90.550.10">
    <property type="entry name" value="Spore Coat Polysaccharide Biosynthesis Protein SpsA, Chain A"/>
    <property type="match status" value="1"/>
</dbReference>
<dbReference type="HAMAP" id="MF_00316">
    <property type="entry name" value="MobA"/>
    <property type="match status" value="1"/>
</dbReference>
<dbReference type="InterPro" id="IPR025877">
    <property type="entry name" value="MobA-like_NTP_Trfase"/>
</dbReference>
<dbReference type="InterPro" id="IPR013482">
    <property type="entry name" value="Molybde_CF_guanTrfase"/>
</dbReference>
<dbReference type="InterPro" id="IPR029044">
    <property type="entry name" value="Nucleotide-diphossugar_trans"/>
</dbReference>
<dbReference type="NCBIfam" id="TIGR02665">
    <property type="entry name" value="molyb_mobA"/>
    <property type="match status" value="1"/>
</dbReference>
<dbReference type="PANTHER" id="PTHR19136">
    <property type="entry name" value="MOLYBDENUM COFACTOR GUANYLYLTRANSFERASE"/>
    <property type="match status" value="1"/>
</dbReference>
<dbReference type="PANTHER" id="PTHR19136:SF81">
    <property type="entry name" value="MOLYBDENUM COFACTOR GUANYLYLTRANSFERASE"/>
    <property type="match status" value="1"/>
</dbReference>
<dbReference type="Pfam" id="PF12804">
    <property type="entry name" value="NTP_transf_3"/>
    <property type="match status" value="1"/>
</dbReference>
<dbReference type="SUPFAM" id="SSF53448">
    <property type="entry name" value="Nucleotide-diphospho-sugar transferases"/>
    <property type="match status" value="1"/>
</dbReference>
<name>MOBA_RHIR8</name>